<name>SRP09_CAEEL</name>
<dbReference type="EMBL" id="Z22177">
    <property type="protein sequence ID" value="CAA80148.1"/>
    <property type="molecule type" value="Genomic_DNA"/>
</dbReference>
<dbReference type="PIR" id="S40765">
    <property type="entry name" value="S40765"/>
</dbReference>
<dbReference type="RefSeq" id="NP_499026.1">
    <property type="nucleotide sequence ID" value="NM_066625.4"/>
</dbReference>
<dbReference type="SMR" id="P34642"/>
<dbReference type="BioGRID" id="41492">
    <property type="interactions" value="2"/>
</dbReference>
<dbReference type="FunCoup" id="P34642">
    <property type="interactions" value="2175"/>
</dbReference>
<dbReference type="IntAct" id="P34642">
    <property type="interactions" value="1"/>
</dbReference>
<dbReference type="STRING" id="6239.ZK512.4.2"/>
<dbReference type="PaxDb" id="6239-ZK512.4"/>
<dbReference type="PeptideAtlas" id="P34642"/>
<dbReference type="EnsemblMetazoa" id="ZK512.4.1">
    <property type="protein sequence ID" value="ZK512.4.1"/>
    <property type="gene ID" value="WBGene00013984"/>
</dbReference>
<dbReference type="GeneID" id="176293"/>
<dbReference type="KEGG" id="cel:CELE_ZK512.4"/>
<dbReference type="UCSC" id="ZK512.4">
    <property type="organism name" value="c. elegans"/>
</dbReference>
<dbReference type="AGR" id="WB:WBGene00013984"/>
<dbReference type="CTD" id="176293"/>
<dbReference type="WormBase" id="ZK512.4">
    <property type="protein sequence ID" value="CE00410"/>
    <property type="gene ID" value="WBGene00013984"/>
</dbReference>
<dbReference type="eggNOG" id="KOG3465">
    <property type="taxonomic scope" value="Eukaryota"/>
</dbReference>
<dbReference type="GeneTree" id="ENSGT00390000018505"/>
<dbReference type="HOGENOM" id="CLU_144337_3_0_1"/>
<dbReference type="InParanoid" id="P34642"/>
<dbReference type="OMA" id="DPMKVRF"/>
<dbReference type="OrthoDB" id="360923at2759"/>
<dbReference type="PhylomeDB" id="P34642"/>
<dbReference type="Reactome" id="R-CEL-1799339">
    <property type="pathway name" value="SRP-dependent cotranslational protein targeting to membrane"/>
</dbReference>
<dbReference type="PRO" id="PR:P34642"/>
<dbReference type="Proteomes" id="UP000001940">
    <property type="component" value="Chromosome III"/>
</dbReference>
<dbReference type="Bgee" id="WBGene00013984">
    <property type="expression patterns" value="Expressed in pharyngeal muscle cell (C elegans) and 4 other cell types or tissues"/>
</dbReference>
<dbReference type="GO" id="GO:0005786">
    <property type="term" value="C:signal recognition particle, endoplasmic reticulum targeting"/>
    <property type="evidence" value="ECO:0000318"/>
    <property type="project" value="GO_Central"/>
</dbReference>
<dbReference type="GO" id="GO:0008312">
    <property type="term" value="F:7S RNA binding"/>
    <property type="evidence" value="ECO:0007669"/>
    <property type="project" value="InterPro"/>
</dbReference>
<dbReference type="GO" id="GO:0045900">
    <property type="term" value="P:negative regulation of translational elongation"/>
    <property type="evidence" value="ECO:0007669"/>
    <property type="project" value="InterPro"/>
</dbReference>
<dbReference type="GO" id="GO:0006614">
    <property type="term" value="P:SRP-dependent cotranslational protein targeting to membrane"/>
    <property type="evidence" value="ECO:0000318"/>
    <property type="project" value="GO_Central"/>
</dbReference>
<dbReference type="FunFam" id="3.30.720.10:FF:000001">
    <property type="entry name" value="Signal recognition particle 9 kDa protein"/>
    <property type="match status" value="1"/>
</dbReference>
<dbReference type="Gene3D" id="3.30.720.10">
    <property type="entry name" value="Signal recognition particle alu RNA binding heterodimer, srp9/1"/>
    <property type="match status" value="1"/>
</dbReference>
<dbReference type="InterPro" id="IPR009018">
    <property type="entry name" value="Signal_recog_particle_SRP9/14"/>
</dbReference>
<dbReference type="InterPro" id="IPR008832">
    <property type="entry name" value="SRP9"/>
</dbReference>
<dbReference type="InterPro" id="IPR039914">
    <property type="entry name" value="SRP9-like"/>
</dbReference>
<dbReference type="InterPro" id="IPR039432">
    <property type="entry name" value="SRP9_dom"/>
</dbReference>
<dbReference type="PANTHER" id="PTHR12834">
    <property type="entry name" value="SIGNAL RECOGNITION PARTICLE 9 KDA PROTEIN"/>
    <property type="match status" value="1"/>
</dbReference>
<dbReference type="PANTHER" id="PTHR12834:SF12">
    <property type="entry name" value="SIGNAL RECOGNITION PARTICLE 9 KDA PROTEIN"/>
    <property type="match status" value="1"/>
</dbReference>
<dbReference type="Pfam" id="PF05486">
    <property type="entry name" value="SRP9-21"/>
    <property type="match status" value="1"/>
</dbReference>
<dbReference type="PIRSF" id="PIRSF017029">
    <property type="entry name" value="Signal_recog_particle_SRP9"/>
    <property type="match status" value="1"/>
</dbReference>
<dbReference type="SUPFAM" id="SSF54762">
    <property type="entry name" value="Signal recognition particle alu RNA binding heterodimer, SRP9/14"/>
    <property type="match status" value="1"/>
</dbReference>
<gene>
    <name type="ORF">ZK512.4</name>
</gene>
<comment type="function">
    <text evidence="2">Component of the signal recognition particle (SRP) complex, a ribonucleoprotein complex that mediates the cotranslational targeting of secretory and membrane proteins to the endoplasmic reticulum (ER) (By similarity). SRP9 together with SRP14 and the Alu portion of the SRP RNA, constitutes the elongation arrest domain of SRP (By similarity). The complex of SRP9 and SRP14 is required for SRP RNA binding (By similarity).</text>
</comment>
<comment type="subunit">
    <text evidence="2 3">Heterodimer with SRP14; binds RNA as heterodimer (By similarity). Component of a signal recognition particle complex that consists of a 7SL RNA molecule of 300 nucleotides and six protein subunits: srpa-72, srpa-68, SRP54, F37F2.2/SRP19, F25G6.8/SRP14 and ZK512.4/SRP9 (By similarity).</text>
</comment>
<comment type="subcellular location">
    <subcellularLocation>
        <location evidence="1">Cytoplasm</location>
    </subcellularLocation>
</comment>
<comment type="similarity">
    <text evidence="4">Belongs to the SRP9 family.</text>
</comment>
<accession>P34642</accession>
<evidence type="ECO:0000250" key="1"/>
<evidence type="ECO:0000250" key="2">
    <source>
        <dbReference type="UniProtKB" id="P21262"/>
    </source>
</evidence>
<evidence type="ECO:0000250" key="3">
    <source>
        <dbReference type="UniProtKB" id="P49458"/>
    </source>
</evidence>
<evidence type="ECO:0000305" key="4"/>
<proteinExistence type="inferred from homology"/>
<protein>
    <recommendedName>
        <fullName>Signal recognition particle 9 kDa protein</fullName>
        <shortName>SRP9</shortName>
    </recommendedName>
</protein>
<keyword id="KW-0963">Cytoplasm</keyword>
<keyword id="KW-1185">Reference proteome</keyword>
<keyword id="KW-0687">Ribonucleoprotein</keyword>
<keyword id="KW-0694">RNA-binding</keyword>
<keyword id="KW-0733">Signal recognition particle</keyword>
<sequence length="76" mass="8780">MTYFTSWDEFAKAAERLHSANPEKCRFVTKYNHTKGQLVLKLTDDVVCLQYSTNQLQDVKKLEKLSSTLLRGIVTQ</sequence>
<organism>
    <name type="scientific">Caenorhabditis elegans</name>
    <dbReference type="NCBI Taxonomy" id="6239"/>
    <lineage>
        <taxon>Eukaryota</taxon>
        <taxon>Metazoa</taxon>
        <taxon>Ecdysozoa</taxon>
        <taxon>Nematoda</taxon>
        <taxon>Chromadorea</taxon>
        <taxon>Rhabditida</taxon>
        <taxon>Rhabditina</taxon>
        <taxon>Rhabditomorpha</taxon>
        <taxon>Rhabditoidea</taxon>
        <taxon>Rhabditidae</taxon>
        <taxon>Peloderinae</taxon>
        <taxon>Caenorhabditis</taxon>
    </lineage>
</organism>
<reference key="1">
    <citation type="journal article" date="1994" name="Nature">
        <title>2.2 Mb of contiguous nucleotide sequence from chromosome III of C. elegans.</title>
        <authorList>
            <person name="Wilson R."/>
            <person name="Ainscough R."/>
            <person name="Anderson K."/>
            <person name="Baynes C."/>
            <person name="Berks M."/>
            <person name="Bonfield J."/>
            <person name="Burton J."/>
            <person name="Connell M."/>
            <person name="Copsey T."/>
            <person name="Cooper J."/>
            <person name="Coulson A."/>
            <person name="Craxton M."/>
            <person name="Dear S."/>
            <person name="Du Z."/>
            <person name="Durbin R."/>
            <person name="Favello A."/>
            <person name="Fraser A."/>
            <person name="Fulton L."/>
            <person name="Gardner A."/>
            <person name="Green P."/>
            <person name="Hawkins T."/>
            <person name="Hillier L."/>
            <person name="Jier M."/>
            <person name="Johnston L."/>
            <person name="Jones M."/>
            <person name="Kershaw J."/>
            <person name="Kirsten J."/>
            <person name="Laisster N."/>
            <person name="Latreille P."/>
            <person name="Lightning J."/>
            <person name="Lloyd C."/>
            <person name="Mortimore B."/>
            <person name="O'Callaghan M."/>
            <person name="Parsons J."/>
            <person name="Percy C."/>
            <person name="Rifken L."/>
            <person name="Roopra A."/>
            <person name="Saunders D."/>
            <person name="Shownkeen R."/>
            <person name="Sims M."/>
            <person name="Smaldon N."/>
            <person name="Smith A."/>
            <person name="Smith M."/>
            <person name="Sonnhammer E."/>
            <person name="Staden R."/>
            <person name="Sulston J."/>
            <person name="Thierry-Mieg J."/>
            <person name="Thomas K."/>
            <person name="Vaudin M."/>
            <person name="Vaughan K."/>
            <person name="Waterston R."/>
            <person name="Watson A."/>
            <person name="Weinstock L."/>
            <person name="Wilkinson-Sproat J."/>
            <person name="Wohldman P."/>
        </authorList>
    </citation>
    <scope>NUCLEOTIDE SEQUENCE [LARGE SCALE GENOMIC DNA]</scope>
    <source>
        <strain>Bristol N2</strain>
    </source>
</reference>
<reference key="2">
    <citation type="journal article" date="1998" name="Science">
        <title>Genome sequence of the nematode C. elegans: a platform for investigating biology.</title>
        <authorList>
            <consortium name="The C. elegans sequencing consortium"/>
        </authorList>
    </citation>
    <scope>NUCLEOTIDE SEQUENCE [LARGE SCALE GENOMIC DNA]</scope>
    <source>
        <strain>Bristol N2</strain>
    </source>
</reference>
<feature type="chain" id="PRO_0000135184" description="Signal recognition particle 9 kDa protein">
    <location>
        <begin position="1"/>
        <end position="76"/>
    </location>
</feature>